<gene>
    <name evidence="8 9" type="primary">tnsA</name>
</gene>
<geneLocation type="plasmid">
    <name>R721</name>
</geneLocation>
<comment type="function">
    <text evidence="3 7">Required for Tn7 transposition. Forms the transposase, together with TnsB (PubMed:10704304, PubMed:23674682, PubMed:8947057). TnsA executes the 5'-DNA strand breakage reaction (PubMed:10704304, PubMed:8947057). TnsABC and TnsD promote high-frequency insertion of Tn7 into a specific target site known as att-Tn7 whereas TnsABC and TnsE promote low-frequency insertion into many different sites.</text>
</comment>
<comment type="cofactor">
    <cofactor evidence="4 5">
        <name>Mg(2+)</name>
        <dbReference type="ChEBI" id="CHEBI:18420"/>
    </cofactor>
    <cofactor evidence="11">
        <name>Mn(2+)</name>
        <dbReference type="ChEBI" id="CHEBI:29035"/>
    </cofactor>
    <text evidence="3 4 5">The active site binds 2 Mg(2+) ions (PubMed:10911996, PubMed:15257292). According to PubMed:10704304, no transposition occurs with Mg(2+) (PubMed:10704304).</text>
</comment>
<comment type="subunit">
    <text evidence="5 6 7">Heteromer with TnsB (PubMed:23674682, PubMed:8947057). Interacts with TnsC (via C-terminus); this interaction allows TnsA to bind donor DNA (PubMed:15257292).</text>
</comment>
<feature type="chain" id="PRO_0000072611" description="Transposon Tn7 transposition protein TnsA">
    <location>
        <begin position="1"/>
        <end position="273"/>
    </location>
</feature>
<feature type="DNA-binding region" description="H-T-H motif" evidence="1">
    <location>
        <begin position="90"/>
        <end position="108"/>
    </location>
</feature>
<feature type="active site" evidence="4">
    <location>
        <position position="63"/>
    </location>
</feature>
<feature type="active site" evidence="2">
    <location>
        <position position="73"/>
    </location>
</feature>
<feature type="active site" evidence="4">
    <location>
        <position position="114"/>
    </location>
</feature>
<feature type="active site" evidence="4">
    <location>
        <position position="132"/>
    </location>
</feature>
<feature type="binding site" evidence="4 5">
    <location>
        <position position="114"/>
    </location>
    <ligand>
        <name>Mg(2+)</name>
        <dbReference type="ChEBI" id="CHEBI:18420"/>
        <label>1</label>
    </ligand>
</feature>
<feature type="binding site" evidence="4 5">
    <location>
        <position position="130"/>
    </location>
    <ligand>
        <name>Mg(2+)</name>
        <dbReference type="ChEBI" id="CHEBI:18420"/>
        <label>2</label>
    </ligand>
</feature>
<feature type="binding site" evidence="4 5">
    <location>
        <position position="131"/>
    </location>
    <ligand>
        <name>Mg(2+)</name>
        <dbReference type="ChEBI" id="CHEBI:18420"/>
        <label>2</label>
    </ligand>
</feature>
<feature type="mutagenesis site" description="No effect on recombination." evidence="7">
    <original>D</original>
    <variation>A</variation>
    <location>
        <position position="28"/>
    </location>
</feature>
<feature type="mutagenesis site" description="No effect on recombination." evidence="7">
    <original>T</original>
    <variation>A</variation>
    <location>
        <position position="34"/>
    </location>
</feature>
<feature type="mutagenesis site" description="Modest decrease in 5'-cleavage." evidence="7">
    <original>E</original>
    <variation>A</variation>
    <location>
        <position position="37"/>
    </location>
</feature>
<feature type="mutagenesis site" description="Prevents recombination, may affect protein structure." evidence="7">
    <original>H</original>
    <variation>A</variation>
    <location>
        <position position="57"/>
    </location>
</feature>
<feature type="mutagenesis site" description="Prevents recombination, may affect protein structure." evidence="7">
    <original>S</original>
    <variation>A</variation>
    <location>
        <position position="60"/>
    </location>
</feature>
<feature type="mutagenesis site" description="No effect on recombination." evidence="7">
    <original>D</original>
    <variation>A</variation>
    <location>
        <position position="108"/>
    </location>
</feature>
<feature type="mutagenesis site" description="Prevents 5'-cleavage." evidence="7">
    <original>D</original>
    <variation>A</variation>
    <location>
        <position position="114"/>
    </location>
</feature>
<feature type="mutagenesis site" description="No effect on recombination." evidence="7">
    <original>E</original>
    <variation>A</variation>
    <location>
        <position position="144"/>
    </location>
</feature>
<feature type="mutagenesis site" description="No effect on recombination." evidence="7">
    <original>E</original>
    <variation>A</variation>
    <location>
        <position position="147"/>
    </location>
</feature>
<feature type="mutagenesis site" description="Decrease in 5' cleavage." evidence="7">
    <original>E</original>
    <variation>A</variation>
    <location>
        <position position="149"/>
    </location>
</feature>
<feature type="sequence conflict" description="In Ref. 2; AAA24680." evidence="10" ref="2">
    <original>D</original>
    <variation>G</variation>
    <location>
        <position position="139"/>
    </location>
</feature>
<feature type="sequence conflict" description="In Ref. 2; AAA24680." evidence="10" ref="2">
    <original>K</original>
    <variation>Q</variation>
    <location>
        <position position="227"/>
    </location>
</feature>
<feature type="helix" evidence="14">
    <location>
        <begin position="10"/>
        <end position="18"/>
    </location>
</feature>
<feature type="turn" evidence="14">
    <location>
        <begin position="19"/>
        <end position="22"/>
    </location>
</feature>
<feature type="helix" evidence="14">
    <location>
        <begin position="26"/>
        <end position="28"/>
    </location>
</feature>
<feature type="helix" evidence="14">
    <location>
        <begin position="35"/>
        <end position="37"/>
    </location>
</feature>
<feature type="strand" evidence="14">
    <location>
        <begin position="45"/>
        <end position="48"/>
    </location>
</feature>
<feature type="turn" evidence="14">
    <location>
        <begin position="50"/>
        <end position="52"/>
    </location>
</feature>
<feature type="strand" evidence="14">
    <location>
        <begin position="53"/>
        <end position="58"/>
    </location>
</feature>
<feature type="helix" evidence="14">
    <location>
        <begin position="61"/>
        <end position="72"/>
    </location>
</feature>
<feature type="strand" evidence="14">
    <location>
        <begin position="76"/>
        <end position="84"/>
    </location>
</feature>
<feature type="helix" evidence="14">
    <location>
        <begin position="87"/>
        <end position="97"/>
    </location>
</feature>
<feature type="strand" evidence="14">
    <location>
        <begin position="112"/>
        <end position="123"/>
    </location>
</feature>
<feature type="strand" evidence="14">
    <location>
        <begin position="125"/>
        <end position="131"/>
    </location>
</feature>
<feature type="helix" evidence="14">
    <location>
        <begin position="134"/>
        <end position="138"/>
    </location>
</feature>
<feature type="helix" evidence="14">
    <location>
        <begin position="140"/>
        <end position="156"/>
    </location>
</feature>
<feature type="strand" evidence="14">
    <location>
        <begin position="160"/>
        <end position="163"/>
    </location>
</feature>
<feature type="helix" evidence="14">
    <location>
        <begin position="165"/>
        <end position="167"/>
    </location>
</feature>
<feature type="helix" evidence="14">
    <location>
        <begin position="170"/>
        <end position="180"/>
    </location>
</feature>
<feature type="helix" evidence="14">
    <location>
        <begin position="189"/>
        <end position="192"/>
    </location>
</feature>
<feature type="helix" evidence="14">
    <location>
        <begin position="195"/>
        <end position="204"/>
    </location>
</feature>
<feature type="turn" evidence="14">
    <location>
        <begin position="205"/>
        <end position="207"/>
    </location>
</feature>
<feature type="helix" evidence="14">
    <location>
        <begin position="210"/>
        <end position="220"/>
    </location>
</feature>
<feature type="helix" evidence="14">
    <location>
        <begin position="227"/>
        <end position="237"/>
    </location>
</feature>
<feature type="strand" evidence="14">
    <location>
        <begin position="240"/>
        <end position="242"/>
    </location>
</feature>
<feature type="helix" evidence="14">
    <location>
        <begin position="249"/>
        <end position="251"/>
    </location>
</feature>
<feature type="helix" evidence="14">
    <location>
        <begin position="254"/>
        <end position="256"/>
    </location>
</feature>
<feature type="strand" evidence="14">
    <location>
        <begin position="262"/>
        <end position="264"/>
    </location>
</feature>
<accession>P13988</accession>
<accession>Q47662</accession>
<keyword id="KW-0002">3D-structure</keyword>
<keyword id="KW-0233">DNA recombination</keyword>
<keyword id="KW-0238">DNA-binding</keyword>
<keyword id="KW-0255">Endonuclease</keyword>
<keyword id="KW-0378">Hydrolase</keyword>
<keyword id="KW-0460">Magnesium</keyword>
<keyword id="KW-0464">Manganese</keyword>
<keyword id="KW-0479">Metal-binding</keyword>
<keyword id="KW-0540">Nuclease</keyword>
<keyword id="KW-0614">Plasmid</keyword>
<keyword id="KW-0814">Transposable element</keyword>
<keyword id="KW-0815">Transposition</keyword>
<proteinExistence type="evidence at protein level"/>
<name>TNSA_ECOLX</name>
<protein>
    <recommendedName>
        <fullName>Transposon Tn7 transposition protein TnsA</fullName>
    </recommendedName>
    <alternativeName>
        <fullName evidence="10">Restriction enzyme-like endonuclease TnsA</fullName>
        <ecNumber evidence="11">3.1.21.-</ecNumber>
    </alternativeName>
</protein>
<sequence>MAKANSSFSEVQIARRIKEGRGQGHGKDYIPWLTVQEVPSSGRSHRIYSHKTGRVHHLLSDLELAVFLSLEWESSVLDIREQFPLLPSDTRQIAIDSGIKHPVIRGVDQVMSTDFLVDCKDGPFEQFAIQVKPAAALQDERTLEKLELERRYWQQKQIPWFIFTDKEINPVVKENIEWLYSVKTEEVSAELLAQLSPLAHILQEKGDENIINVCKQVDIAYDLELGKTLSEIRALTANGFIKFNIYKSFRANKCADLCISQVVNMEELRYVAN</sequence>
<evidence type="ECO:0000250" key="1"/>
<evidence type="ECO:0000250" key="2">
    <source>
        <dbReference type="UniProtKB" id="P15075"/>
    </source>
</evidence>
<evidence type="ECO:0000269" key="3">
    <source>
    </source>
</evidence>
<evidence type="ECO:0000269" key="4">
    <source>
    </source>
</evidence>
<evidence type="ECO:0000269" key="5">
    <source>
    </source>
</evidence>
<evidence type="ECO:0000269" key="6">
    <source>
    </source>
</evidence>
<evidence type="ECO:0000269" key="7">
    <source>
    </source>
</evidence>
<evidence type="ECO:0000303" key="8">
    <source>
    </source>
</evidence>
<evidence type="ECO:0000303" key="9">
    <source>
    </source>
</evidence>
<evidence type="ECO:0000305" key="10"/>
<evidence type="ECO:0000305" key="11">
    <source>
    </source>
</evidence>
<evidence type="ECO:0007744" key="12">
    <source>
        <dbReference type="PDB" id="1F1Z"/>
    </source>
</evidence>
<evidence type="ECO:0007744" key="13">
    <source>
        <dbReference type="PDB" id="1T0F"/>
    </source>
</evidence>
<evidence type="ECO:0007829" key="14">
    <source>
        <dbReference type="PDB" id="1T0F"/>
    </source>
</evidence>
<reference key="1">
    <citation type="journal article" date="1990" name="Nucleic Acids Res.">
        <title>DNA sequence analysis of five genes; tnsA, B, C, D and E, required for Tn7 transposition.</title>
        <authorList>
            <person name="Flores C."/>
            <person name="Qadri M.I."/>
            <person name="Lichtenstein C."/>
        </authorList>
    </citation>
    <scope>NUCLEOTIDE SEQUENCE [GENOMIC DNA]</scope>
</reference>
<reference key="2">
    <citation type="journal article" date="1990" name="Gene">
        <title>Identification of transposition proteins encoded by the bacterial transposon Tn7.</title>
        <authorList>
            <person name="Orle K.A."/>
            <person name="Craig N.L."/>
        </authorList>
    </citation>
    <scope>NUCLEOTIDE SEQUENCE [GENOMIC DNA]</scope>
</reference>
<reference key="3">
    <citation type="journal article" date="1991" name="Gene">
        <authorList>
            <person name="Orle K.A."/>
            <person name="Craig N.L."/>
        </authorList>
    </citation>
    <scope>ERRATUM OF PUBMED:1655576</scope>
</reference>
<reference key="4">
    <citation type="submission" date="2000-06" db="EMBL/GenBank/DDBJ databases">
        <title>Organization and diversification of plasmid genomes: complete nucleotide sequence of the R721 genome.</title>
        <authorList>
            <person name="Sampei G."/>
            <person name="Motomura K."/>
            <person name="Masuda S."/>
            <person name="Yamaguchi T."/>
            <person name="Ando K."/>
            <person name="Oishi T."/>
            <person name="Furuya N."/>
            <person name="Komano T."/>
            <person name="Mizobuchi K."/>
        </authorList>
    </citation>
    <scope>NUCLEOTIDE SEQUENCE [GENOMIC DNA]</scope>
    <source>
        <plasmid>R721</plasmid>
    </source>
</reference>
<reference key="5">
    <citation type="journal article" date="1986" name="Biochem. J.">
        <title>Insertion of transposon Tn7 into the Escherichia coli glmS transcriptional terminator.</title>
        <authorList>
            <person name="Gay N.J."/>
            <person name="Tybulewicz V.L.J."/>
            <person name="Walker J.E."/>
        </authorList>
    </citation>
    <scope>NUCLEOTIDE SEQUENCE [GENOMIC DNA] OF 1-134</scope>
</reference>
<reference key="6">
    <citation type="journal article" date="1996" name="EMBO J.">
        <title>The Tn7 transposase is a heteromeric complex in which DNA breakage and joining activities are distributed between different gene products.</title>
        <authorList>
            <person name="Sarnovsky R.J."/>
            <person name="May E.W."/>
            <person name="Craig N.L."/>
        </authorList>
    </citation>
    <scope>FUNCTION</scope>
    <scope>SUBUNIT</scope>
    <scope>MUTAGENESIS OF ASP-28; THR-34; GLU-37; HIS-57; SER-60; ASP-108; ASP-114; GLU-144; GLU-147 AND GLU-149</scope>
    <scope>COFACTOR</scope>
    <scope>CATALYTIC ACTIVITY</scope>
</reference>
<reference key="7">
    <citation type="journal article" date="2000" name="J. Mol. Biol.">
        <title>A minimal system for Tn7 transposition: the transposon-encoded proteins TnsA and TnsB can execute DNA breakage and joining reactions that generate circularized Tn7 species.</title>
        <authorList>
            <person name="Biery M.C."/>
            <person name="Lopata M."/>
            <person name="Craig N.L."/>
        </authorList>
    </citation>
    <scope>FUNCTION</scope>
</reference>
<reference key="8">
    <citation type="journal article" date="2013" name="Proc. Natl. Acad. Sci. U.S.A.">
        <title>Direct interaction between the TnsA and TnsB subunits controls the heteromeric Tn7 transposase.</title>
        <authorList>
            <person name="Choi K.Y."/>
            <person name="Li Y."/>
            <person name="Sarnovsky R."/>
            <person name="Craig N.L."/>
        </authorList>
    </citation>
    <scope>FUNCTION</scope>
    <scope>SUBUNIT</scope>
</reference>
<reference evidence="12" key="9">
    <citation type="journal article" date="2000" name="Mol. Cell">
        <title>Unexpected structural diversity in DNA recombination: the restriction endonuclease connection.</title>
        <authorList>
            <person name="Hickman A.B."/>
            <person name="Li Y."/>
            <person name="Mathew S.V."/>
            <person name="May E.W."/>
            <person name="Craig N.L."/>
            <person name="Dyda F."/>
        </authorList>
    </citation>
    <scope>X-RAY CRYSTALLOGRAPHY (2.40 ANGSTROMS) IN COMPLEX WITH MAGNESIUM</scope>
    <scope>ACTIVE SITE</scope>
    <scope>COFACTOR</scope>
</reference>
<reference evidence="13" key="10">
    <citation type="journal article" date="2004" name="EMBO J.">
        <title>The carboxy-terminal portion of TnsC activates the Tn7 transposase through a specific interaction with TnsA.</title>
        <authorList>
            <person name="Ronning D.R."/>
            <person name="Li Y."/>
            <person name="Perez Z.N."/>
            <person name="Ross P.D."/>
            <person name="Hickman A.B."/>
            <person name="Craig N.L."/>
            <person name="Dyda F."/>
        </authorList>
    </citation>
    <scope>X-RAY CRYSTALLOGRAPHY (1.85 ANGSTROMS) IN COMPLEX WITH MAGNESIUM</scope>
    <scope>INTERACTION WITH TNSC</scope>
</reference>
<dbReference type="EC" id="3.1.21.-" evidence="11"/>
<dbReference type="EMBL" id="X17693">
    <property type="protein sequence ID" value="CAA35683.1"/>
    <property type="molecule type" value="Genomic_DNA"/>
</dbReference>
<dbReference type="EMBL" id="M37391">
    <property type="protein sequence ID" value="AAA24680.1"/>
    <property type="molecule type" value="Genomic_DNA"/>
</dbReference>
<dbReference type="EMBL" id="AP002527">
    <property type="protein sequence ID" value="BAB12613.1"/>
    <property type="molecule type" value="Genomic_DNA"/>
</dbReference>
<dbReference type="EMBL" id="X03474">
    <property type="protein sequence ID" value="CAA27192.1"/>
    <property type="molecule type" value="Genomic_DNA"/>
</dbReference>
<dbReference type="EMBL" id="V00620">
    <property type="protein sequence ID" value="CAA23895.1"/>
    <property type="molecule type" value="Genomic_DNA"/>
</dbReference>
<dbReference type="PIR" id="S12637">
    <property type="entry name" value="S12637"/>
</dbReference>
<dbReference type="RefSeq" id="NP_065320.1">
    <property type="nucleotide sequence ID" value="NC_002525.1"/>
</dbReference>
<dbReference type="RefSeq" id="WP_001029679.1">
    <property type="nucleotide sequence ID" value="NZ_WWEV01000116.1"/>
</dbReference>
<dbReference type="PDB" id="1F1Z">
    <property type="method" value="X-ray"/>
    <property type="resolution" value="2.40 A"/>
    <property type="chains" value="A/B=1-273"/>
</dbReference>
<dbReference type="PDB" id="1T0F">
    <property type="method" value="X-ray"/>
    <property type="resolution" value="1.85 A"/>
    <property type="chains" value="A/B=1-273"/>
</dbReference>
<dbReference type="PDBsum" id="1F1Z"/>
<dbReference type="PDBsum" id="1T0F"/>
<dbReference type="SMR" id="P13988"/>
<dbReference type="IntAct" id="P13988">
    <property type="interactions" value="1"/>
</dbReference>
<dbReference type="BRENDA" id="2.7.7.B22">
    <property type="organism ID" value="2026"/>
</dbReference>
<dbReference type="EvolutionaryTrace" id="P13988"/>
<dbReference type="GO" id="GO:0005694">
    <property type="term" value="C:chromosome"/>
    <property type="evidence" value="ECO:0000314"/>
    <property type="project" value="UniProtKB"/>
</dbReference>
<dbReference type="GO" id="GO:0003677">
    <property type="term" value="F:DNA binding"/>
    <property type="evidence" value="ECO:0007669"/>
    <property type="project" value="UniProtKB-KW"/>
</dbReference>
<dbReference type="GO" id="GO:0004519">
    <property type="term" value="F:endonuclease activity"/>
    <property type="evidence" value="ECO:0007669"/>
    <property type="project" value="UniProtKB-KW"/>
</dbReference>
<dbReference type="GO" id="GO:0046872">
    <property type="term" value="F:metal ion binding"/>
    <property type="evidence" value="ECO:0007669"/>
    <property type="project" value="UniProtKB-KW"/>
</dbReference>
<dbReference type="GO" id="GO:0004803">
    <property type="term" value="F:transposase activity"/>
    <property type="evidence" value="ECO:0000314"/>
    <property type="project" value="UniProtKB"/>
</dbReference>
<dbReference type="GO" id="GO:0006313">
    <property type="term" value="P:DNA transposition"/>
    <property type="evidence" value="ECO:0000314"/>
    <property type="project" value="UniProtKB"/>
</dbReference>
<dbReference type="CDD" id="cd22362">
    <property type="entry name" value="TnsA_endonuclease-like"/>
    <property type="match status" value="1"/>
</dbReference>
<dbReference type="Gene3D" id="3.40.1350.10">
    <property type="match status" value="1"/>
</dbReference>
<dbReference type="Gene3D" id="1.10.10.10">
    <property type="entry name" value="Winged helix-like DNA-binding domain superfamily/Winged helix DNA-binding domain"/>
    <property type="match status" value="1"/>
</dbReference>
<dbReference type="InterPro" id="IPR011335">
    <property type="entry name" value="Restrct_endonuc-II-like"/>
</dbReference>
<dbReference type="InterPro" id="IPR014832">
    <property type="entry name" value="TnsA_C"/>
</dbReference>
<dbReference type="InterPro" id="IPR014833">
    <property type="entry name" value="TnsA_N"/>
</dbReference>
<dbReference type="InterPro" id="IPR011856">
    <property type="entry name" value="tRNA_endonuc-like_dom_sf"/>
</dbReference>
<dbReference type="InterPro" id="IPR036388">
    <property type="entry name" value="WH-like_DNA-bd_sf"/>
</dbReference>
<dbReference type="InterPro" id="IPR036390">
    <property type="entry name" value="WH_DNA-bd_sf"/>
</dbReference>
<dbReference type="Pfam" id="PF08721">
    <property type="entry name" value="Tn7_Tnp_TnsA_C"/>
    <property type="match status" value="1"/>
</dbReference>
<dbReference type="Pfam" id="PF08722">
    <property type="entry name" value="Tn7_TnsA-like_N"/>
    <property type="match status" value="1"/>
</dbReference>
<dbReference type="SUPFAM" id="SSF52980">
    <property type="entry name" value="Restriction endonuclease-like"/>
    <property type="match status" value="1"/>
</dbReference>
<dbReference type="SUPFAM" id="SSF46785">
    <property type="entry name" value="Winged helix' DNA-binding domain"/>
    <property type="match status" value="1"/>
</dbReference>
<organism>
    <name type="scientific">Escherichia coli</name>
    <dbReference type="NCBI Taxonomy" id="562"/>
    <lineage>
        <taxon>Bacteria</taxon>
        <taxon>Pseudomonadati</taxon>
        <taxon>Pseudomonadota</taxon>
        <taxon>Gammaproteobacteria</taxon>
        <taxon>Enterobacterales</taxon>
        <taxon>Enterobacteriaceae</taxon>
        <taxon>Escherichia</taxon>
    </lineage>
</organism>